<keyword id="KW-1185">Reference proteome</keyword>
<evidence type="ECO:0000305" key="1"/>
<gene>
    <name type="ordered locus">BQ2027_MB0513</name>
</gene>
<reference key="1">
    <citation type="journal article" date="2003" name="Proc. Natl. Acad. Sci. U.S.A.">
        <title>The complete genome sequence of Mycobacterium bovis.</title>
        <authorList>
            <person name="Garnier T."/>
            <person name="Eiglmeier K."/>
            <person name="Camus J.-C."/>
            <person name="Medina N."/>
            <person name="Mansoor H."/>
            <person name="Pryor M."/>
            <person name="Duthoy S."/>
            <person name="Grondin S."/>
            <person name="Lacroix C."/>
            <person name="Monsempe C."/>
            <person name="Simon S."/>
            <person name="Harris B."/>
            <person name="Atkin R."/>
            <person name="Doggett J."/>
            <person name="Mayes R."/>
            <person name="Keating L."/>
            <person name="Wheeler P.R."/>
            <person name="Parkhill J."/>
            <person name="Barrell B.G."/>
            <person name="Cole S.T."/>
            <person name="Gordon S.V."/>
            <person name="Hewinson R.G."/>
        </authorList>
    </citation>
    <scope>NUCLEOTIDE SEQUENCE [LARGE SCALE GENOMIC DNA]</scope>
    <source>
        <strain>ATCC BAA-935 / AF2122/97</strain>
    </source>
</reference>
<reference key="2">
    <citation type="journal article" date="2017" name="Genome Announc.">
        <title>Updated reference genome sequence and annotation of Mycobacterium bovis AF2122/97.</title>
        <authorList>
            <person name="Malone K.M."/>
            <person name="Farrell D."/>
            <person name="Stuber T.P."/>
            <person name="Schubert O.T."/>
            <person name="Aebersold R."/>
            <person name="Robbe-Austerman S."/>
            <person name="Gordon S.V."/>
        </authorList>
    </citation>
    <scope>NUCLEOTIDE SEQUENCE [LARGE SCALE GENOMIC DNA]</scope>
    <scope>GENOME REANNOTATION</scope>
    <source>
        <strain>ATCC BAA-935 / AF2122/97</strain>
    </source>
</reference>
<accession>P0A5D2</accession>
<accession>A0A1R3XVI9</accession>
<accession>O06402</accession>
<accession>Q11166</accession>
<accession>X2BF87</accession>
<comment type="similarity">
    <text evidence="1">Belongs to the NAD(P)-dependent epimerase/dehydratase family.</text>
</comment>
<feature type="chain" id="PRO_0000103708" description="Uncharacterized protein Mb0513">
    <location>
        <begin position="1"/>
        <end position="376"/>
    </location>
</feature>
<sequence>MSSSNGRGGAGGVGGSSEHPQYPKVVLVTGACRFLGGYLTARLAQNPLINRVIAVDAIAPSKDMLRRMGRAEFVRADIRNPFIAKVIRNGEVDTVVHAAAASYAPRSGGSAALKELNVMGAMQLFAACQKAPSVRRVVLKSTSEVYGSSPHDPVMFTEDSSSRRPFSQGFPKDSLDIEGYVRALGRRRPDIAVTILRLANMIGPAMDTTLSRYLAGPLVPTIFGRDARLQLLHEQDALGALERAAMAGKAGTFNIGADGILMLSQAIRRAGRIPVPVPGFGVWALDSLRRANHYTELNREQFAYLSYGRVMDTTRMRVELGYQPKWTTVEAFDDYFRGRGLTPIIDPHRVRSWEGRAVGLAQRWGSRNPIPWSGLR</sequence>
<protein>
    <recommendedName>
        <fullName>Uncharacterized protein Mb0513</fullName>
    </recommendedName>
</protein>
<dbReference type="EMBL" id="LT708304">
    <property type="protein sequence ID" value="SIT99109.1"/>
    <property type="molecule type" value="Genomic_DNA"/>
</dbReference>
<dbReference type="RefSeq" id="NP_854176.1">
    <property type="nucleotide sequence ID" value="NC_002945.3"/>
</dbReference>
<dbReference type="RefSeq" id="WP_003402607.1">
    <property type="nucleotide sequence ID" value="NC_002945.4"/>
</dbReference>
<dbReference type="SMR" id="P0A5D2"/>
<dbReference type="PATRIC" id="fig|233413.5.peg.559"/>
<dbReference type="Proteomes" id="UP000001419">
    <property type="component" value="Chromosome"/>
</dbReference>
<dbReference type="CDD" id="cd05240">
    <property type="entry name" value="UDP_G4E_3_SDR_e"/>
    <property type="match status" value="1"/>
</dbReference>
<dbReference type="FunFam" id="3.40.50.720:FF:000342">
    <property type="entry name" value="NAD dependent epimerase/dehydratase family protein"/>
    <property type="match status" value="1"/>
</dbReference>
<dbReference type="Gene3D" id="3.40.50.720">
    <property type="entry name" value="NAD(P)-binding Rossmann-like Domain"/>
    <property type="match status" value="1"/>
</dbReference>
<dbReference type="InterPro" id="IPR001509">
    <property type="entry name" value="Epimerase_deHydtase"/>
</dbReference>
<dbReference type="InterPro" id="IPR050177">
    <property type="entry name" value="Lipid_A_modif_metabolic_enz"/>
</dbReference>
<dbReference type="InterPro" id="IPR036291">
    <property type="entry name" value="NAD(P)-bd_dom_sf"/>
</dbReference>
<dbReference type="PANTHER" id="PTHR43245">
    <property type="entry name" value="BIFUNCTIONAL POLYMYXIN RESISTANCE PROTEIN ARNA"/>
    <property type="match status" value="1"/>
</dbReference>
<dbReference type="PANTHER" id="PTHR43245:SF52">
    <property type="entry name" value="NAD-DEPENDENT EPIMERASE_DEHYDRATASE"/>
    <property type="match status" value="1"/>
</dbReference>
<dbReference type="Pfam" id="PF01370">
    <property type="entry name" value="Epimerase"/>
    <property type="match status" value="1"/>
</dbReference>
<dbReference type="SUPFAM" id="SSF51735">
    <property type="entry name" value="NAD(P)-binding Rossmann-fold domains"/>
    <property type="match status" value="1"/>
</dbReference>
<organism>
    <name type="scientific">Mycobacterium bovis (strain ATCC BAA-935 / AF2122/97)</name>
    <dbReference type="NCBI Taxonomy" id="233413"/>
    <lineage>
        <taxon>Bacteria</taxon>
        <taxon>Bacillati</taxon>
        <taxon>Actinomycetota</taxon>
        <taxon>Actinomycetes</taxon>
        <taxon>Mycobacteriales</taxon>
        <taxon>Mycobacteriaceae</taxon>
        <taxon>Mycobacterium</taxon>
        <taxon>Mycobacterium tuberculosis complex</taxon>
    </lineage>
</organism>
<name>Y513_MYCBO</name>
<proteinExistence type="inferred from homology"/>